<feature type="chain" id="PRO_0000439651" description="Transcription factor MYB7">
    <location>
        <begin position="1"/>
        <end position="269"/>
    </location>
</feature>
<feature type="domain" description="HTH myb-type 1" evidence="1">
    <location>
        <begin position="9"/>
        <end position="61"/>
    </location>
</feature>
<feature type="domain" description="HTH myb-type 2" evidence="1">
    <location>
        <begin position="62"/>
        <end position="116"/>
    </location>
</feature>
<feature type="DNA-binding region" description="H-T-H motif" evidence="1">
    <location>
        <begin position="37"/>
        <end position="61"/>
    </location>
</feature>
<feature type="DNA-binding region" description="H-T-H motif" evidence="1">
    <location>
        <begin position="89"/>
        <end position="112"/>
    </location>
</feature>
<feature type="mutagenesis site" description="Loss of nuclear localization; cytoplasmic localization; abolishes interaction with SAD2." evidence="4">
    <original>D</original>
    <variation>N</variation>
    <location>
        <position position="252"/>
    </location>
</feature>
<dbReference type="EMBL" id="U26937">
    <property type="protein sequence ID" value="AAA98762.1"/>
    <property type="molecule type" value="mRNA"/>
</dbReference>
<dbReference type="EMBL" id="X90385">
    <property type="protein sequence ID" value="CAA62033.1"/>
    <property type="molecule type" value="Genomic_DNA"/>
</dbReference>
<dbReference type="EMBL" id="AY519573">
    <property type="protein sequence ID" value="AAS10043.1"/>
    <property type="molecule type" value="mRNA"/>
</dbReference>
<dbReference type="EMBL" id="AC005825">
    <property type="protein sequence ID" value="AAD24605.1"/>
    <property type="molecule type" value="Genomic_DNA"/>
</dbReference>
<dbReference type="EMBL" id="CP002685">
    <property type="protein sequence ID" value="AEC06531.1"/>
    <property type="molecule type" value="Genomic_DNA"/>
</dbReference>
<dbReference type="EMBL" id="Z95811">
    <property type="protein sequence ID" value="CAB09243.1"/>
    <property type="molecule type" value="mRNA"/>
</dbReference>
<dbReference type="EMBL" id="AY072387">
    <property type="protein sequence ID" value="AAL62379.1"/>
    <property type="status" value="ALT_INIT"/>
    <property type="molecule type" value="mRNA"/>
</dbReference>
<dbReference type="EMBL" id="BT000161">
    <property type="protein sequence ID" value="AAN15480.1"/>
    <property type="molecule type" value="mRNA"/>
</dbReference>
<dbReference type="PIR" id="S58292">
    <property type="entry name" value="S58292"/>
</dbReference>
<dbReference type="RefSeq" id="NP_179263.1">
    <property type="nucleotide sequence ID" value="NM_127224.6"/>
</dbReference>
<dbReference type="SMR" id="Q42379"/>
<dbReference type="IntAct" id="Q42379">
    <property type="interactions" value="1"/>
</dbReference>
<dbReference type="STRING" id="3702.Q42379"/>
<dbReference type="PaxDb" id="3702-AT2G16720.1"/>
<dbReference type="ProteomicsDB" id="251331"/>
<dbReference type="EnsemblPlants" id="AT2G16720.1">
    <property type="protein sequence ID" value="AT2G16720.1"/>
    <property type="gene ID" value="AT2G16720"/>
</dbReference>
<dbReference type="GeneID" id="816173"/>
<dbReference type="Gramene" id="AT2G16720.1">
    <property type="protein sequence ID" value="AT2G16720.1"/>
    <property type="gene ID" value="AT2G16720"/>
</dbReference>
<dbReference type="KEGG" id="ath:AT2G16720"/>
<dbReference type="Araport" id="AT2G16720"/>
<dbReference type="TAIR" id="AT2G16720">
    <property type="gene designation" value="MYB7"/>
</dbReference>
<dbReference type="eggNOG" id="KOG0048">
    <property type="taxonomic scope" value="Eukaryota"/>
</dbReference>
<dbReference type="HOGENOM" id="CLU_028567_23_2_1"/>
<dbReference type="InParanoid" id="Q42379"/>
<dbReference type="OMA" id="MENGMEC"/>
<dbReference type="PhylomeDB" id="Q42379"/>
<dbReference type="PRO" id="PR:Q42379"/>
<dbReference type="Proteomes" id="UP000006548">
    <property type="component" value="Chromosome 2"/>
</dbReference>
<dbReference type="ExpressionAtlas" id="Q42379">
    <property type="expression patterns" value="baseline and differential"/>
</dbReference>
<dbReference type="GO" id="GO:0005634">
    <property type="term" value="C:nucleus"/>
    <property type="evidence" value="ECO:0000314"/>
    <property type="project" value="UniProtKB"/>
</dbReference>
<dbReference type="GO" id="GO:0003700">
    <property type="term" value="F:DNA-binding transcription factor activity"/>
    <property type="evidence" value="ECO:0000250"/>
    <property type="project" value="TAIR"/>
</dbReference>
<dbReference type="GO" id="GO:0000976">
    <property type="term" value="F:transcription cis-regulatory region binding"/>
    <property type="evidence" value="ECO:0000353"/>
    <property type="project" value="TAIR"/>
</dbReference>
<dbReference type="GO" id="GO:1900384">
    <property type="term" value="P:regulation of flavonol biosynthetic process"/>
    <property type="evidence" value="ECO:0000315"/>
    <property type="project" value="TAIR"/>
</dbReference>
<dbReference type="CDD" id="cd00167">
    <property type="entry name" value="SANT"/>
    <property type="match status" value="2"/>
</dbReference>
<dbReference type="FunFam" id="1.10.10.60:FF:000121">
    <property type="entry name" value="Myb transcription factor"/>
    <property type="match status" value="1"/>
</dbReference>
<dbReference type="FunFam" id="1.10.10.60:FF:000157">
    <property type="entry name" value="Myb transcription factor"/>
    <property type="match status" value="1"/>
</dbReference>
<dbReference type="Gene3D" id="1.10.10.60">
    <property type="entry name" value="Homeodomain-like"/>
    <property type="match status" value="2"/>
</dbReference>
<dbReference type="InterPro" id="IPR009057">
    <property type="entry name" value="Homeodomain-like_sf"/>
</dbReference>
<dbReference type="InterPro" id="IPR017930">
    <property type="entry name" value="Myb_dom"/>
</dbReference>
<dbReference type="InterPro" id="IPR015495">
    <property type="entry name" value="Myb_TF_plants"/>
</dbReference>
<dbReference type="InterPro" id="IPR001005">
    <property type="entry name" value="SANT/Myb"/>
</dbReference>
<dbReference type="PANTHER" id="PTHR47994">
    <property type="entry name" value="F14D16.11-RELATED"/>
    <property type="match status" value="1"/>
</dbReference>
<dbReference type="PANTHER" id="PTHR47994:SF5">
    <property type="entry name" value="F14D16.11-RELATED"/>
    <property type="match status" value="1"/>
</dbReference>
<dbReference type="Pfam" id="PF00249">
    <property type="entry name" value="Myb_DNA-binding"/>
    <property type="match status" value="2"/>
</dbReference>
<dbReference type="SMART" id="SM00717">
    <property type="entry name" value="SANT"/>
    <property type="match status" value="2"/>
</dbReference>
<dbReference type="SUPFAM" id="SSF46689">
    <property type="entry name" value="Homeodomain-like"/>
    <property type="match status" value="1"/>
</dbReference>
<dbReference type="PROSITE" id="PS51294">
    <property type="entry name" value="HTH_MYB"/>
    <property type="match status" value="2"/>
</dbReference>
<evidence type="ECO:0000255" key="1">
    <source>
        <dbReference type="PROSITE-ProRule" id="PRU00625"/>
    </source>
</evidence>
<evidence type="ECO:0000269" key="2">
    <source>
    </source>
</evidence>
<evidence type="ECO:0000269" key="3">
    <source>
    </source>
</evidence>
<evidence type="ECO:0000269" key="4">
    <source>
    </source>
</evidence>
<evidence type="ECO:0000303" key="5">
    <source>
    </source>
</evidence>
<evidence type="ECO:0000305" key="6"/>
<evidence type="ECO:0000312" key="7">
    <source>
        <dbReference type="Araport" id="AT2G16720"/>
    </source>
</evidence>
<evidence type="ECO:0000312" key="8">
    <source>
        <dbReference type="EMBL" id="CAB09243.1"/>
    </source>
</evidence>
<reference key="1">
    <citation type="journal article" date="1995" name="Plant J.">
        <title>Isolation of two novel myb-like genes from Arabidopsis and studies on the DNA-binding properties of their products.</title>
        <authorList>
            <person name="Li S.F."/>
            <person name="Parish R.W."/>
        </authorList>
    </citation>
    <scope>NUCLEOTIDE SEQUENCE [MRNA]</scope>
    <source>
        <strain>cv. Landsberg erecta</strain>
    </source>
</reference>
<reference key="2">
    <citation type="journal article" date="1996" name="Plant Mol. Biol.">
        <title>Identification of a light-regulated MYB gene from an Arabidopsis transcription factor gene collection.</title>
        <authorList>
            <person name="Quaedvlieg N."/>
            <person name="Dockx J."/>
            <person name="Keultjes G."/>
            <person name="Kock P."/>
            <person name="Wilmering J."/>
            <person name="Weisbeek P."/>
            <person name="Smeekens S."/>
        </authorList>
    </citation>
    <scope>NUCLEOTIDE SEQUENCE [GENOMIC DNA]</scope>
</reference>
<reference key="3">
    <citation type="submission" date="2004-01" db="EMBL/GenBank/DDBJ databases">
        <title>The MYB transcription factor family in Arabidopsis: a genome-wide cloning and expression pattern analysis.</title>
        <authorList>
            <person name="Qu L."/>
            <person name="Gu H."/>
        </authorList>
    </citation>
    <scope>NUCLEOTIDE SEQUENCE [MRNA]</scope>
</reference>
<reference key="4">
    <citation type="journal article" date="1999" name="Nature">
        <title>Sequence and analysis of chromosome 2 of the plant Arabidopsis thaliana.</title>
        <authorList>
            <person name="Lin X."/>
            <person name="Kaul S."/>
            <person name="Rounsley S.D."/>
            <person name="Shea T.P."/>
            <person name="Benito M.-I."/>
            <person name="Town C.D."/>
            <person name="Fujii C.Y."/>
            <person name="Mason T.M."/>
            <person name="Bowman C.L."/>
            <person name="Barnstead M.E."/>
            <person name="Feldblyum T.V."/>
            <person name="Buell C.R."/>
            <person name="Ketchum K.A."/>
            <person name="Lee J.J."/>
            <person name="Ronning C.M."/>
            <person name="Koo H.L."/>
            <person name="Moffat K.S."/>
            <person name="Cronin L.A."/>
            <person name="Shen M."/>
            <person name="Pai G."/>
            <person name="Van Aken S."/>
            <person name="Umayam L."/>
            <person name="Tallon L.J."/>
            <person name="Gill J.E."/>
            <person name="Adams M.D."/>
            <person name="Carrera A.J."/>
            <person name="Creasy T.H."/>
            <person name="Goodman H.M."/>
            <person name="Somerville C.R."/>
            <person name="Copenhaver G.P."/>
            <person name="Preuss D."/>
            <person name="Nierman W.C."/>
            <person name="White O."/>
            <person name="Eisen J.A."/>
            <person name="Salzberg S.L."/>
            <person name="Fraser C.M."/>
            <person name="Venter J.C."/>
        </authorList>
    </citation>
    <scope>NUCLEOTIDE SEQUENCE [LARGE SCALE GENOMIC DNA]</scope>
    <source>
        <strain>cv. Columbia</strain>
    </source>
</reference>
<reference key="5">
    <citation type="journal article" date="2017" name="Plant J.">
        <title>Araport11: a complete reannotation of the Arabidopsis thaliana reference genome.</title>
        <authorList>
            <person name="Cheng C.Y."/>
            <person name="Krishnakumar V."/>
            <person name="Chan A.P."/>
            <person name="Thibaud-Nissen F."/>
            <person name="Schobel S."/>
            <person name="Town C.D."/>
        </authorList>
    </citation>
    <scope>GENOME REANNOTATION</scope>
    <source>
        <strain>cv. Columbia</strain>
    </source>
</reference>
<reference key="6">
    <citation type="submission" date="1997-05" db="EMBL/GenBank/DDBJ databases">
        <title>One hundred R2R3-MYB genes in the genome of Arabidopsis thaliana.</title>
        <authorList>
            <person name="Romero I."/>
            <person name="Fuertes A."/>
            <person name="Benito M.J."/>
            <person name="Malpica J."/>
            <person name="Leyva A."/>
            <person name="Paz-Ares J."/>
        </authorList>
    </citation>
    <scope>NUCLEOTIDE SEQUENCE [MRNA] OF 55-99</scope>
    <source>
        <strain>cv. Landsberg erecta</strain>
    </source>
</reference>
<reference key="7">
    <citation type="journal article" date="2003" name="Science">
        <title>Empirical analysis of transcriptional activity in the Arabidopsis genome.</title>
        <authorList>
            <person name="Yamada K."/>
            <person name="Lim J."/>
            <person name="Dale J.M."/>
            <person name="Chen H."/>
            <person name="Shinn P."/>
            <person name="Palm C.J."/>
            <person name="Southwick A.M."/>
            <person name="Wu H.C."/>
            <person name="Kim C.J."/>
            <person name="Nguyen M."/>
            <person name="Pham P.K."/>
            <person name="Cheuk R.F."/>
            <person name="Karlin-Newmann G."/>
            <person name="Liu S.X."/>
            <person name="Lam B."/>
            <person name="Sakano H."/>
            <person name="Wu T."/>
            <person name="Yu G."/>
            <person name="Miranda M."/>
            <person name="Quach H.L."/>
            <person name="Tripp M."/>
            <person name="Chang C.H."/>
            <person name="Lee J.M."/>
            <person name="Toriumi M.J."/>
            <person name="Chan M.M."/>
            <person name="Tang C.C."/>
            <person name="Onodera C.S."/>
            <person name="Deng J.M."/>
            <person name="Akiyama K."/>
            <person name="Ansari Y."/>
            <person name="Arakawa T."/>
            <person name="Banh J."/>
            <person name="Banno F."/>
            <person name="Bowser L."/>
            <person name="Brooks S.Y."/>
            <person name="Carninci P."/>
            <person name="Chao Q."/>
            <person name="Choy N."/>
            <person name="Enju A."/>
            <person name="Goldsmith A.D."/>
            <person name="Gurjal M."/>
            <person name="Hansen N.F."/>
            <person name="Hayashizaki Y."/>
            <person name="Johnson-Hopson C."/>
            <person name="Hsuan V.W."/>
            <person name="Iida K."/>
            <person name="Karnes M."/>
            <person name="Khan S."/>
            <person name="Koesema E."/>
            <person name="Ishida J."/>
            <person name="Jiang P.X."/>
            <person name="Jones T."/>
            <person name="Kawai J."/>
            <person name="Kamiya A."/>
            <person name="Meyers C."/>
            <person name="Nakajima M."/>
            <person name="Narusaka M."/>
            <person name="Seki M."/>
            <person name="Sakurai T."/>
            <person name="Satou M."/>
            <person name="Tamse R."/>
            <person name="Vaysberg M."/>
            <person name="Wallender E.K."/>
            <person name="Wong C."/>
            <person name="Yamamura Y."/>
            <person name="Yuan S."/>
            <person name="Shinozaki K."/>
            <person name="Davis R.W."/>
            <person name="Theologis A."/>
            <person name="Ecker J.R."/>
        </authorList>
    </citation>
    <scope>NUCLEOTIDE SEQUENCE [LARGE SCALE MRNA] OF 96-269 AND 216-269</scope>
    <source>
        <strain>cv. Columbia</strain>
    </source>
</reference>
<reference key="8">
    <citation type="journal article" date="2014" name="Plant Cell Physiol.">
        <title>AtMYB7, a new player in the regulation of UV-sunscreens in Arabidopsis thaliana.</title>
        <authorList>
            <person name="Fornale S."/>
            <person name="Lopez E."/>
            <person name="Salazar-Henao J.E."/>
            <person name="Fernandez-Nohales P."/>
            <person name="Rigau J."/>
            <person name="Caparros-Ruiz D."/>
        </authorList>
    </citation>
    <scope>FUNCTION</scope>
    <scope>TISSUE SPECIFICITY</scope>
    <scope>DISRUPTION PHENOTYPE</scope>
</reference>
<reference key="9">
    <citation type="journal article" date="2015" name="Plant Cell Environ.">
        <title>AtMyb7, a subgroup 4 R2R3 Myb, negatively regulates ABA-induced inhibition of seed germination by blocking the expression of the bZIP transcription factor ABI5.</title>
        <authorList>
            <person name="Kim J.H."/>
            <person name="Hyun W.Y."/>
            <person name="Nguyen H.N."/>
            <person name="Jeong C.Y."/>
            <person name="Xiong L."/>
            <person name="Hong S.W."/>
            <person name="Lee H."/>
        </authorList>
    </citation>
    <scope>FUNCTION</scope>
    <scope>SUBCELLULAR LOCATION</scope>
    <scope>TISSUE SPECIFICITY</scope>
    <scope>INDUCTION</scope>
    <scope>DISRUPTION PHENOTYPE</scope>
</reference>
<reference key="10">
    <citation type="journal article" date="2015" name="Plant J.">
        <title>Changing a conserved amino acid in R2R3-MYB transcription repressors results in cytoplasmic accumulation and abolishes their repressive activity in Arabidopsis.</title>
        <authorList>
            <person name="Zhou M."/>
            <person name="Sun Z."/>
            <person name="Wang C."/>
            <person name="Zhang X."/>
            <person name="Tang Y."/>
            <person name="Zhu X."/>
            <person name="Shao J."/>
            <person name="Wu Y."/>
        </authorList>
    </citation>
    <scope>INTERACTION WITH SAD2</scope>
    <scope>SUBCELLULAR LOCATION</scope>
    <scope>MUTAGENESIS OF ASP-252</scope>
</reference>
<organism>
    <name type="scientific">Arabidopsis thaliana</name>
    <name type="common">Mouse-ear cress</name>
    <dbReference type="NCBI Taxonomy" id="3702"/>
    <lineage>
        <taxon>Eukaryota</taxon>
        <taxon>Viridiplantae</taxon>
        <taxon>Streptophyta</taxon>
        <taxon>Embryophyta</taxon>
        <taxon>Tracheophyta</taxon>
        <taxon>Spermatophyta</taxon>
        <taxon>Magnoliopsida</taxon>
        <taxon>eudicotyledons</taxon>
        <taxon>Gunneridae</taxon>
        <taxon>Pentapetalae</taxon>
        <taxon>rosids</taxon>
        <taxon>malvids</taxon>
        <taxon>Brassicales</taxon>
        <taxon>Brassicaceae</taxon>
        <taxon>Camelineae</taxon>
        <taxon>Arabidopsis</taxon>
    </lineage>
</organism>
<name>MYB7_ARATH</name>
<gene>
    <name evidence="8" type="primary">MYB7</name>
    <name evidence="7" type="ordered locus">At2g16720</name>
</gene>
<sequence length="269" mass="31009">MGRSPCCEKEHMNKGAWTKEEDERLVSYIKSHGEGCWRSLPRAAGLLRCGKSCRLRWINYLRPDLKRGNFTHDEDELIIKLHSLLGNKWSLIAARLPGRTDNEIKNYWNTHIKRKLLSKGIDPATHRGINEAKISDLKKTKDQIVKDVSFVTKFEETDKSGDQKQNKYIRNGLVCKEERVVVEEKIGPDLNLELRISPPWQNQREISTCTASRFYMENDMECSSETVKCQTENSSSISYSSIDISSSNVGYDFLGLKTRILDFRSLEMK</sequence>
<protein>
    <recommendedName>
        <fullName evidence="6">Transcription factor MYB7</fullName>
    </recommendedName>
    <alternativeName>
        <fullName evidence="6">Myb-related protein 7</fullName>
        <shortName evidence="8">AtMYB7</shortName>
    </alternativeName>
    <alternativeName>
        <fullName evidence="6">Myb-related protein Y49</fullName>
        <shortName evidence="5">AtY49</shortName>
    </alternativeName>
</protein>
<accession>Q42379</accession>
<accession>Q8VY75</accession>
<accession>Q9SAL8</accession>
<comment type="function">
    <text evidence="2 3">Transcription factor involved in the negative regulation of flavonol biosynthesis. Represses the early phenylpropanoid genes, phenylalanine ammonia-lyase (PAL), cinnamate 4-hydroxylase (C4H) and 4-coumarate-CoA ligase (4CL), as well as the flavonoid-specific genes, flavonoid 3'-hydroxylase (F3'H) and dihydroflavonol 4-reductase (DFR) (PubMed:24319076). Plays a role in seed germination inhibition. Negatively regulates the expression of the abscisic acid (ABA) signaling transcription factor ABI5 in seeds (PubMed:25053018).</text>
</comment>
<comment type="subunit">
    <text evidence="4">Interacts with SAD2.</text>
</comment>
<comment type="subcellular location">
    <subcellularLocation>
        <location evidence="1 3 4">Nucleus</location>
    </subcellularLocation>
</comment>
<comment type="tissue specificity">
    <text evidence="2 3">Expressed in anthers (PubMed:24319076, PubMed:25053018). Expressed in pollen grains and mature seeds (PubMed:25053018). Expressed in roots and vasculature of leaves (PubMed:24319076).</text>
</comment>
<comment type="induction">
    <text evidence="2 3">Induced by abscisic acid (ABA) and osmotic stress (PubMed:25053018). Induced by salt stress (PubMed:24319076, PubMed:25053018).</text>
</comment>
<comment type="disruption phenotype">
    <text evidence="2 3">No visible phenotype under normal growth conditions. Increased levels of flavonols (PubMed:24319076). Decreased levels of anthocyanins (PubMed:24319076, PubMed:25053018).</text>
</comment>
<comment type="sequence caution" evidence="6">
    <conflict type="erroneous initiation">
        <sequence resource="EMBL-CDS" id="AAL62379"/>
    </conflict>
    <text>Truncated N-terminus.</text>
</comment>
<keyword id="KW-0238">DNA-binding</keyword>
<keyword id="KW-0539">Nucleus</keyword>
<keyword id="KW-1185">Reference proteome</keyword>
<keyword id="KW-0677">Repeat</keyword>
<keyword id="KW-0678">Repressor</keyword>
<keyword id="KW-0804">Transcription</keyword>
<keyword id="KW-0805">Transcription regulation</keyword>
<proteinExistence type="evidence at protein level"/>